<proteinExistence type="evidence at protein level"/>
<gene>
    <name evidence="7" type="primary">Efr3a</name>
    <name evidence="4" type="synonym">Kiaa0143</name>
</gene>
<keyword id="KW-0025">Alternative splicing</keyword>
<keyword id="KW-1003">Cell membrane</keyword>
<keyword id="KW-0963">Cytoplasm</keyword>
<keyword id="KW-0449">Lipoprotein</keyword>
<keyword id="KW-0472">Membrane</keyword>
<keyword id="KW-0564">Palmitate</keyword>
<keyword id="KW-0597">Phosphoprotein</keyword>
<keyword id="KW-1185">Reference proteome</keyword>
<evidence type="ECO:0000250" key="1">
    <source>
        <dbReference type="UniProtKB" id="Q14156"/>
    </source>
</evidence>
<evidence type="ECO:0000269" key="2">
    <source>
    </source>
</evidence>
<evidence type="ECO:0000269" key="3">
    <source>
    </source>
</evidence>
<evidence type="ECO:0000303" key="4">
    <source>
    </source>
</evidence>
<evidence type="ECO:0000303" key="5">
    <source>
    </source>
</evidence>
<evidence type="ECO:0000305" key="6"/>
<evidence type="ECO:0000312" key="7">
    <source>
        <dbReference type="MGI" id="MGI:1923990"/>
    </source>
</evidence>
<evidence type="ECO:0007744" key="8">
    <source>
    </source>
</evidence>
<evidence type="ECO:0007744" key="9">
    <source>
    </source>
</evidence>
<reference key="1">
    <citation type="journal article" date="2004" name="Brain Res. Mol. Brain Res.">
        <title>Mouse homolog of KIAA0143 protein: hearing deficit induces specific changes of expression in auditory brainstem neurons.</title>
        <authorList>
            <person name="Munemoto Y."/>
            <person name="Houtani T."/>
            <person name="Kase M."/>
            <person name="Sakuma S."/>
            <person name="Baba K."/>
            <person name="Yamashita T."/>
            <person name="Sugimoto T."/>
        </authorList>
    </citation>
    <scope>NUCLEOTIDE SEQUENCE [MRNA] (ISOFORM 1)</scope>
    <scope>SUBCELLULAR LOCATION</scope>
    <scope>TISSUE SPECIFICITY</scope>
    <scope>INDUCTION</scope>
    <source>
        <strain>C57BL/6J</strain>
        <tissue>Brain</tissue>
    </source>
</reference>
<reference key="2">
    <citation type="journal article" date="2003" name="DNA Res.">
        <title>Prediction of the coding sequences of mouse homologues of KIAA gene: III. The complete nucleotide sequences of 500 mouse KIAA-homologous cDNAs identified by screening of terminal sequences of cDNA clones randomly sampled from size-fractionated libraries.</title>
        <authorList>
            <person name="Okazaki N."/>
            <person name="Kikuno R."/>
            <person name="Ohara R."/>
            <person name="Inamoto S."/>
            <person name="Koseki H."/>
            <person name="Hiraoka S."/>
            <person name="Saga Y."/>
            <person name="Nagase T."/>
            <person name="Ohara O."/>
            <person name="Koga H."/>
        </authorList>
    </citation>
    <scope>NUCLEOTIDE SEQUENCE [LARGE SCALE MRNA] (ISOFORM 1)</scope>
    <source>
        <tissue>Embryonic tail</tissue>
    </source>
</reference>
<reference key="3">
    <citation type="journal article" date="2005" name="Science">
        <title>The transcriptional landscape of the mammalian genome.</title>
        <authorList>
            <person name="Carninci P."/>
            <person name="Kasukawa T."/>
            <person name="Katayama S."/>
            <person name="Gough J."/>
            <person name="Frith M.C."/>
            <person name="Maeda N."/>
            <person name="Oyama R."/>
            <person name="Ravasi T."/>
            <person name="Lenhard B."/>
            <person name="Wells C."/>
            <person name="Kodzius R."/>
            <person name="Shimokawa K."/>
            <person name="Bajic V.B."/>
            <person name="Brenner S.E."/>
            <person name="Batalov S."/>
            <person name="Forrest A.R."/>
            <person name="Zavolan M."/>
            <person name="Davis M.J."/>
            <person name="Wilming L.G."/>
            <person name="Aidinis V."/>
            <person name="Allen J.E."/>
            <person name="Ambesi-Impiombato A."/>
            <person name="Apweiler R."/>
            <person name="Aturaliya R.N."/>
            <person name="Bailey T.L."/>
            <person name="Bansal M."/>
            <person name="Baxter L."/>
            <person name="Beisel K.W."/>
            <person name="Bersano T."/>
            <person name="Bono H."/>
            <person name="Chalk A.M."/>
            <person name="Chiu K.P."/>
            <person name="Choudhary V."/>
            <person name="Christoffels A."/>
            <person name="Clutterbuck D.R."/>
            <person name="Crowe M.L."/>
            <person name="Dalla E."/>
            <person name="Dalrymple B.P."/>
            <person name="de Bono B."/>
            <person name="Della Gatta G."/>
            <person name="di Bernardo D."/>
            <person name="Down T."/>
            <person name="Engstrom P."/>
            <person name="Fagiolini M."/>
            <person name="Faulkner G."/>
            <person name="Fletcher C.F."/>
            <person name="Fukushima T."/>
            <person name="Furuno M."/>
            <person name="Futaki S."/>
            <person name="Gariboldi M."/>
            <person name="Georgii-Hemming P."/>
            <person name="Gingeras T.R."/>
            <person name="Gojobori T."/>
            <person name="Green R.E."/>
            <person name="Gustincich S."/>
            <person name="Harbers M."/>
            <person name="Hayashi Y."/>
            <person name="Hensch T.K."/>
            <person name="Hirokawa N."/>
            <person name="Hill D."/>
            <person name="Huminiecki L."/>
            <person name="Iacono M."/>
            <person name="Ikeo K."/>
            <person name="Iwama A."/>
            <person name="Ishikawa T."/>
            <person name="Jakt M."/>
            <person name="Kanapin A."/>
            <person name="Katoh M."/>
            <person name="Kawasawa Y."/>
            <person name="Kelso J."/>
            <person name="Kitamura H."/>
            <person name="Kitano H."/>
            <person name="Kollias G."/>
            <person name="Krishnan S.P."/>
            <person name="Kruger A."/>
            <person name="Kummerfeld S.K."/>
            <person name="Kurochkin I.V."/>
            <person name="Lareau L.F."/>
            <person name="Lazarevic D."/>
            <person name="Lipovich L."/>
            <person name="Liu J."/>
            <person name="Liuni S."/>
            <person name="McWilliam S."/>
            <person name="Madan Babu M."/>
            <person name="Madera M."/>
            <person name="Marchionni L."/>
            <person name="Matsuda H."/>
            <person name="Matsuzawa S."/>
            <person name="Miki H."/>
            <person name="Mignone F."/>
            <person name="Miyake S."/>
            <person name="Morris K."/>
            <person name="Mottagui-Tabar S."/>
            <person name="Mulder N."/>
            <person name="Nakano N."/>
            <person name="Nakauchi H."/>
            <person name="Ng P."/>
            <person name="Nilsson R."/>
            <person name="Nishiguchi S."/>
            <person name="Nishikawa S."/>
            <person name="Nori F."/>
            <person name="Ohara O."/>
            <person name="Okazaki Y."/>
            <person name="Orlando V."/>
            <person name="Pang K.C."/>
            <person name="Pavan W.J."/>
            <person name="Pavesi G."/>
            <person name="Pesole G."/>
            <person name="Petrovsky N."/>
            <person name="Piazza S."/>
            <person name="Reed J."/>
            <person name="Reid J.F."/>
            <person name="Ring B.Z."/>
            <person name="Ringwald M."/>
            <person name="Rost B."/>
            <person name="Ruan Y."/>
            <person name="Salzberg S.L."/>
            <person name="Sandelin A."/>
            <person name="Schneider C."/>
            <person name="Schoenbach C."/>
            <person name="Sekiguchi K."/>
            <person name="Semple C.A."/>
            <person name="Seno S."/>
            <person name="Sessa L."/>
            <person name="Sheng Y."/>
            <person name="Shibata Y."/>
            <person name="Shimada H."/>
            <person name="Shimada K."/>
            <person name="Silva D."/>
            <person name="Sinclair B."/>
            <person name="Sperling S."/>
            <person name="Stupka E."/>
            <person name="Sugiura K."/>
            <person name="Sultana R."/>
            <person name="Takenaka Y."/>
            <person name="Taki K."/>
            <person name="Tammoja K."/>
            <person name="Tan S.L."/>
            <person name="Tang S."/>
            <person name="Taylor M.S."/>
            <person name="Tegner J."/>
            <person name="Teichmann S.A."/>
            <person name="Ueda H.R."/>
            <person name="van Nimwegen E."/>
            <person name="Verardo R."/>
            <person name="Wei C.L."/>
            <person name="Yagi K."/>
            <person name="Yamanishi H."/>
            <person name="Zabarovsky E."/>
            <person name="Zhu S."/>
            <person name="Zimmer A."/>
            <person name="Hide W."/>
            <person name="Bult C."/>
            <person name="Grimmond S.M."/>
            <person name="Teasdale R.D."/>
            <person name="Liu E.T."/>
            <person name="Brusic V."/>
            <person name="Quackenbush J."/>
            <person name="Wahlestedt C."/>
            <person name="Mattick J.S."/>
            <person name="Hume D.A."/>
            <person name="Kai C."/>
            <person name="Sasaki D."/>
            <person name="Tomaru Y."/>
            <person name="Fukuda S."/>
            <person name="Kanamori-Katayama M."/>
            <person name="Suzuki M."/>
            <person name="Aoki J."/>
            <person name="Arakawa T."/>
            <person name="Iida J."/>
            <person name="Imamura K."/>
            <person name="Itoh M."/>
            <person name="Kato T."/>
            <person name="Kawaji H."/>
            <person name="Kawagashira N."/>
            <person name="Kawashima T."/>
            <person name="Kojima M."/>
            <person name="Kondo S."/>
            <person name="Konno H."/>
            <person name="Nakano K."/>
            <person name="Ninomiya N."/>
            <person name="Nishio T."/>
            <person name="Okada M."/>
            <person name="Plessy C."/>
            <person name="Shibata K."/>
            <person name="Shiraki T."/>
            <person name="Suzuki S."/>
            <person name="Tagami M."/>
            <person name="Waki K."/>
            <person name="Watahiki A."/>
            <person name="Okamura-Oho Y."/>
            <person name="Suzuki H."/>
            <person name="Kawai J."/>
            <person name="Hayashizaki Y."/>
        </authorList>
    </citation>
    <scope>NUCLEOTIDE SEQUENCE [LARGE SCALE MRNA] (ISOFORMS 1 AND 2)</scope>
    <source>
        <strain>C57BL/6J</strain>
        <tissue>Brain cortex</tissue>
        <tissue>Olfactory bulb</tissue>
        <tissue>Retina</tissue>
        <tissue>Testis</tissue>
    </source>
</reference>
<reference key="4">
    <citation type="journal article" date="2004" name="Genome Res.">
        <title>The status, quality, and expansion of the NIH full-length cDNA project: the Mammalian Gene Collection (MGC).</title>
        <authorList>
            <consortium name="The MGC Project Team"/>
        </authorList>
    </citation>
    <scope>NUCLEOTIDE SEQUENCE [LARGE SCALE MRNA] (ISOFORM 1)</scope>
    <source>
        <strain>Czech II</strain>
        <tissue>Mammary gland</tissue>
    </source>
</reference>
<reference key="5">
    <citation type="journal article" date="2009" name="Immunity">
        <title>The phagosomal proteome in interferon-gamma-activated macrophages.</title>
        <authorList>
            <person name="Trost M."/>
            <person name="English L."/>
            <person name="Lemieux S."/>
            <person name="Courcelles M."/>
            <person name="Desjardins M."/>
            <person name="Thibault P."/>
        </authorList>
    </citation>
    <scope>PHOSPHORYLATION [LARGE SCALE ANALYSIS] AT SER-692</scope>
    <scope>IDENTIFICATION BY MASS SPECTROMETRY [LARGE SCALE ANALYSIS]</scope>
</reference>
<reference key="6">
    <citation type="journal article" date="2010" name="Cell">
        <title>A tissue-specific atlas of mouse protein phosphorylation and expression.</title>
        <authorList>
            <person name="Huttlin E.L."/>
            <person name="Jedrychowski M.P."/>
            <person name="Elias J.E."/>
            <person name="Goswami T."/>
            <person name="Rad R."/>
            <person name="Beausoleil S.A."/>
            <person name="Villen J."/>
            <person name="Haas W."/>
            <person name="Sowa M.E."/>
            <person name="Gygi S.P."/>
        </authorList>
    </citation>
    <scope>PHOSPHORYLATION [LARGE SCALE ANALYSIS] AT SER-360 AND SER-363</scope>
    <scope>IDENTIFICATION BY MASS SPECTROMETRY [LARGE SCALE ANALYSIS]</scope>
    <source>
        <tissue>Brain</tissue>
        <tissue>Brown adipose tissue</tissue>
        <tissue>Heart</tissue>
        <tissue>Kidney</tissue>
        <tissue>Liver</tissue>
        <tissue>Lung</tissue>
        <tissue>Pancreas</tissue>
        <tissue>Spleen</tissue>
        <tissue>Testis</tissue>
    </source>
</reference>
<reference key="7">
    <citation type="journal article" date="2015" name="J. Cell Sci.">
        <title>EFR3s are palmitoylated plasma membrane proteins that control responsiveness to G-protein-coupled receptors.</title>
        <authorList>
            <person name="Bojjireddy N."/>
            <person name="Guzman-Hernandez M.L."/>
            <person name="Reinhard N.R."/>
            <person name="Jovic M."/>
            <person name="Balla T."/>
        </authorList>
    </citation>
    <scope>TISSUE SPECIFICITY</scope>
</reference>
<comment type="function">
    <text evidence="1">Component of a complex required to localize phosphatidylinositol 4-kinase (PI4K) to the plasma membrane. The complex acts as a regulator of phosphatidylinositol 4-phosphate (PtdIns(4)P) synthesis. In the complex, EFR3A probably acts as the membrane-anchoring component. Also involved in responsiveness to G-protein-coupled receptors; it is however unclear whether this role is direct or indirect.</text>
</comment>
<comment type="subunit">
    <text evidence="1">Component of a phosphatidylinositol 4-kinase (PI4K) complex, composed of PI4KA, EFR3 (EFR3A or EFR3B), TTC7 (TTC7A or TTC7B) and HYCC (HYCC1 or HYCC2).</text>
</comment>
<comment type="subcellular location">
    <subcellularLocation>
        <location evidence="2">Cell membrane</location>
        <topology evidence="1">Lipid-anchor</topology>
    </subcellularLocation>
    <subcellularLocation>
        <location evidence="1">Cytoplasm</location>
        <location evidence="1">Cytosol</location>
    </subcellularLocation>
    <text evidence="1">Palmitoylation anchors the protein to the plasma membrane. A small amount is observed in the cytosol.</text>
</comment>
<comment type="alternative products">
    <event type="alternative splicing"/>
    <isoform>
        <id>Q8BG67-1</id>
        <name>1</name>
        <sequence type="displayed"/>
    </isoform>
    <isoform>
        <id>Q8BG67-2</id>
        <name>2</name>
        <sequence type="described" ref="VSP_022219"/>
    </isoform>
</comment>
<comment type="tissue specificity">
    <text evidence="2 3">Widely expressed (PubMed:25380825). Expressed in neurons of the superior olivary complex of the auditory brainstem. Also expressed at lower levels in the cochlear nucleus, the lateral leminiscal nuclei and the inferior collicus (PubMed:15363888).</text>
</comment>
<comment type="induction">
    <text evidence="2">Expression is reduced in animals with impaired hearing.</text>
</comment>
<comment type="PTM">
    <text evidence="1">Palmitoylated at its N-terminus, anchoring the protein to the plasma membrane.</text>
</comment>
<comment type="similarity">
    <text evidence="6">Belongs to the EFR3 family.</text>
</comment>
<comment type="sequence caution" evidence="6">
    <conflict type="erroneous initiation">
        <sequence resource="EMBL-CDS" id="BAC97875"/>
    </conflict>
    <text>Extended N-terminus.</text>
</comment>
<name>EFR3A_MOUSE</name>
<organism>
    <name type="scientific">Mus musculus</name>
    <name type="common">Mouse</name>
    <dbReference type="NCBI Taxonomy" id="10090"/>
    <lineage>
        <taxon>Eukaryota</taxon>
        <taxon>Metazoa</taxon>
        <taxon>Chordata</taxon>
        <taxon>Craniata</taxon>
        <taxon>Vertebrata</taxon>
        <taxon>Euteleostomi</taxon>
        <taxon>Mammalia</taxon>
        <taxon>Eutheria</taxon>
        <taxon>Euarchontoglires</taxon>
        <taxon>Glires</taxon>
        <taxon>Rodentia</taxon>
        <taxon>Myomorpha</taxon>
        <taxon>Muroidea</taxon>
        <taxon>Muridae</taxon>
        <taxon>Murinae</taxon>
        <taxon>Mus</taxon>
        <taxon>Mus</taxon>
    </lineage>
</organism>
<sequence length="819" mass="92613">MPTRVCCCCSALRPRYKRLVDNIFPEDPKDGLVKADMEKLTFYAVSAPEKLDRIGAYLAERLSRDVVRHRSGYVLIAMEALDQLLMACHSQSIKPFVESFLHMVAKLLESGEPKLQVLGTNSFVKFANIEEDTPSYHRRYDFFVSRFSAMCHSCHSDPEIRTEIRIAGIRGIQGVVRKTVNDELRATIWEPQHMDKIVPSLLFNMQKIEEVDSRLGPPSSPSAADKEENPAVLAESCFRELLGRATFGNMNNAVRPVFAHLDHHKLWDPNEFAVHCFKIIMYSIQAQYSHHVIQEILGHLDARRKDSPRVRAGIIQVLLEAVAIAAKGSIGPTVLEVFNTLLKHLRLSVELEANDSQKGSVGSVTVSSKDNDEKIVQNAVIQTIGFFGSNLPDYQRSEIMMFIMGKVPVFGTSTHTLDISQLGDLGTRRIQIMLLRSLLMVTSGYKAKTIVTALPGSFLDPLLSPSLMEDYELRQLVLEVMHNLMDRHDNRAKLRGIRIIPDVADLKIKREKICRQDTSFMKKNGQQLYRHIYLGCKEEDNVQKNYELLYTSLALITIELANEEVVIDLIRLAIALQDSAIINEDNLSMFHRCGIMALVAAYLNFVSQMIAVPAFCQHVSKVIETRTMEAPYFLPEHIFRDKCMLPKSLEKHDKNLYFLTNKIAESLGGSGYSVERLTVPYVPQVTDEDRLSRRKSIVDTVSIQVDILSNSVPSDDVVSNTEEITFEALKKAIDTNGMEEQEKEKRRLVIEKFQKAPFEEIAAQCESKANLLHDRLAQILELTIRPPPSPSGTLTVTSGHTQYQSVPVYEMKFPDLCVY</sequence>
<accession>Q8BG67</accession>
<accession>Q6ZQI4</accession>
<accession>Q8BXQ7</accession>
<accession>Q8C0Q0</accession>
<accession>Q922I2</accession>
<protein>
    <recommendedName>
        <fullName evidence="6">Protein EFR3 homolog A</fullName>
    </recommendedName>
    <alternativeName>
        <fullName>Protein EFR3-like</fullName>
    </alternativeName>
</protein>
<feature type="chain" id="PRO_0000270766" description="Protein EFR3 homolog A">
    <location>
        <begin position="1"/>
        <end position="819"/>
    </location>
</feature>
<feature type="modified residue" description="Phosphoserine" evidence="9">
    <location>
        <position position="360"/>
    </location>
</feature>
<feature type="modified residue" description="Phosphoserine" evidence="9">
    <location>
        <position position="363"/>
    </location>
</feature>
<feature type="modified residue" description="Phosphoserine" evidence="1">
    <location>
        <position position="420"/>
    </location>
</feature>
<feature type="modified residue" description="Phosphoserine" evidence="8">
    <location>
        <position position="692"/>
    </location>
</feature>
<feature type="splice variant" id="VSP_022219" description="In isoform 2." evidence="5">
    <original>PPPSPSGTLTVTSGHTQYQSVPVYEMKFPDLCVY</original>
    <variation>QRRESMLYKTEAEPCYTQPMAWGQRRIKEKYKAVVK</variation>
    <location>
        <begin position="786"/>
        <end position="819"/>
    </location>
</feature>
<feature type="sequence conflict" description="In Ref. 3; BAC31942." evidence="6" ref="3">
    <original>R</original>
    <variation>H</variation>
    <location>
        <position position="70"/>
    </location>
</feature>
<feature type="sequence conflict" description="In Ref. 4; AAH07482." evidence="6" ref="4">
    <original>V</original>
    <variation>I</variation>
    <location>
        <position position="364"/>
    </location>
</feature>
<feature type="sequence conflict" description="In Ref. 3; BAC31942." evidence="6" ref="3">
    <original>D</original>
    <variation>G</variation>
    <location>
        <position position="585"/>
    </location>
</feature>
<feature type="sequence conflict" description="In Ref. 3; BAC26768." evidence="6" ref="3">
    <original>R</original>
    <variation>T</variation>
    <location>
        <position position="693"/>
    </location>
</feature>
<dbReference type="EMBL" id="AB158474">
    <property type="protein sequence ID" value="BAD52086.1"/>
    <property type="molecule type" value="mRNA"/>
</dbReference>
<dbReference type="EMBL" id="AK129065">
    <property type="protein sequence ID" value="BAC97875.1"/>
    <property type="status" value="ALT_INIT"/>
    <property type="molecule type" value="mRNA"/>
</dbReference>
<dbReference type="EMBL" id="AK030074">
    <property type="protein sequence ID" value="BAC26768.1"/>
    <property type="molecule type" value="mRNA"/>
</dbReference>
<dbReference type="EMBL" id="AK032461">
    <property type="protein sequence ID" value="BAC27881.1"/>
    <property type="molecule type" value="mRNA"/>
</dbReference>
<dbReference type="EMBL" id="AK044000">
    <property type="protein sequence ID" value="BAC31732.1"/>
    <property type="molecule type" value="mRNA"/>
</dbReference>
<dbReference type="EMBL" id="AK044475">
    <property type="protein sequence ID" value="BAC31942.1"/>
    <property type="molecule type" value="mRNA"/>
</dbReference>
<dbReference type="EMBL" id="AK161250">
    <property type="protein sequence ID" value="BAE36269.1"/>
    <property type="molecule type" value="mRNA"/>
</dbReference>
<dbReference type="EMBL" id="BC007482">
    <property type="protein sequence ID" value="AAH07482.1"/>
    <property type="molecule type" value="mRNA"/>
</dbReference>
<dbReference type="CCDS" id="CCDS27507.1">
    <molecule id="Q8BG67-1"/>
</dbReference>
<dbReference type="RefSeq" id="NP_598527.2">
    <molecule id="Q8BG67-1"/>
    <property type="nucleotide sequence ID" value="NM_133766.4"/>
</dbReference>
<dbReference type="BioGRID" id="218290">
    <property type="interactions" value="2"/>
</dbReference>
<dbReference type="FunCoup" id="Q8BG67">
    <property type="interactions" value="2881"/>
</dbReference>
<dbReference type="STRING" id="10090.ENSMUSP00000015146"/>
<dbReference type="GlyGen" id="Q8BG67">
    <property type="glycosylation" value="2 sites, 1 O-linked glycan (1 site)"/>
</dbReference>
<dbReference type="iPTMnet" id="Q8BG67"/>
<dbReference type="PhosphoSitePlus" id="Q8BG67"/>
<dbReference type="SwissPalm" id="Q8BG67"/>
<dbReference type="jPOST" id="Q8BG67"/>
<dbReference type="PaxDb" id="10090-ENSMUSP00000015146"/>
<dbReference type="PeptideAtlas" id="Q8BG67"/>
<dbReference type="ProteomicsDB" id="277729">
    <molecule id="Q8BG67-1"/>
</dbReference>
<dbReference type="ProteomicsDB" id="277730">
    <molecule id="Q8BG67-2"/>
</dbReference>
<dbReference type="Pumba" id="Q8BG67"/>
<dbReference type="Antibodypedia" id="14097">
    <property type="antibodies" value="118 antibodies from 17 providers"/>
</dbReference>
<dbReference type="DNASU" id="76740"/>
<dbReference type="Ensembl" id="ENSMUST00000015146.16">
    <molecule id="Q8BG67-1"/>
    <property type="protein sequence ID" value="ENSMUSP00000015146.10"/>
    <property type="gene ID" value="ENSMUSG00000015002.19"/>
</dbReference>
<dbReference type="Ensembl" id="ENSMUST00000173858.8">
    <molecule id="Q8BG67-2"/>
    <property type="protein sequence ID" value="ENSMUSP00000134385.2"/>
    <property type="gene ID" value="ENSMUSG00000015002.19"/>
</dbReference>
<dbReference type="GeneID" id="76740"/>
<dbReference type="KEGG" id="mmu:76740"/>
<dbReference type="UCSC" id="uc007vzu.1">
    <molecule id="Q8BG67-1"/>
    <property type="organism name" value="mouse"/>
</dbReference>
<dbReference type="AGR" id="MGI:1923990"/>
<dbReference type="CTD" id="23167"/>
<dbReference type="MGI" id="MGI:1923990">
    <property type="gene designation" value="Efr3a"/>
</dbReference>
<dbReference type="VEuPathDB" id="HostDB:ENSMUSG00000015002"/>
<dbReference type="eggNOG" id="KOG1877">
    <property type="taxonomic scope" value="Eukaryota"/>
</dbReference>
<dbReference type="GeneTree" id="ENSGT00390000002143"/>
<dbReference type="HOGENOM" id="CLU_012674_1_0_1"/>
<dbReference type="InParanoid" id="Q8BG67"/>
<dbReference type="OMA" id="QMCHANP"/>
<dbReference type="OrthoDB" id="18979at9989"/>
<dbReference type="PhylomeDB" id="Q8BG67"/>
<dbReference type="TreeFam" id="TF314098"/>
<dbReference type="BioGRID-ORCS" id="76740">
    <property type="hits" value="20 hits in 80 CRISPR screens"/>
</dbReference>
<dbReference type="CD-CODE" id="CE726F99">
    <property type="entry name" value="Postsynaptic density"/>
</dbReference>
<dbReference type="ChiTaRS" id="Efr3a">
    <property type="organism name" value="mouse"/>
</dbReference>
<dbReference type="PRO" id="PR:Q8BG67"/>
<dbReference type="Proteomes" id="UP000000589">
    <property type="component" value="Chromosome 15"/>
</dbReference>
<dbReference type="RNAct" id="Q8BG67">
    <property type="molecule type" value="protein"/>
</dbReference>
<dbReference type="Bgee" id="ENSMUSG00000015002">
    <property type="expression patterns" value="Expressed in pontine nuclear group and 251 other cell types or tissues"/>
</dbReference>
<dbReference type="ExpressionAtlas" id="Q8BG67">
    <property type="expression patterns" value="baseline and differential"/>
</dbReference>
<dbReference type="GO" id="GO:0001533">
    <property type="term" value="C:cornified envelope"/>
    <property type="evidence" value="ECO:0000266"/>
    <property type="project" value="MGI"/>
</dbReference>
<dbReference type="GO" id="GO:0005829">
    <property type="term" value="C:cytosol"/>
    <property type="evidence" value="ECO:0007669"/>
    <property type="project" value="UniProtKB-SubCell"/>
</dbReference>
<dbReference type="GO" id="GO:0098978">
    <property type="term" value="C:glutamatergic synapse"/>
    <property type="evidence" value="ECO:0000314"/>
    <property type="project" value="SynGO"/>
</dbReference>
<dbReference type="GO" id="GO:0005886">
    <property type="term" value="C:plasma membrane"/>
    <property type="evidence" value="ECO:0000314"/>
    <property type="project" value="MGI"/>
</dbReference>
<dbReference type="GO" id="GO:0098793">
    <property type="term" value="C:presynapse"/>
    <property type="evidence" value="ECO:0007669"/>
    <property type="project" value="GOC"/>
</dbReference>
<dbReference type="GO" id="GO:0042803">
    <property type="term" value="F:protein homodimerization activity"/>
    <property type="evidence" value="ECO:0000266"/>
    <property type="project" value="MGI"/>
</dbReference>
<dbReference type="GO" id="GO:0098609">
    <property type="term" value="P:cell-cell adhesion"/>
    <property type="evidence" value="ECO:0000266"/>
    <property type="project" value="MGI"/>
</dbReference>
<dbReference type="GO" id="GO:0072659">
    <property type="term" value="P:protein localization to plasma membrane"/>
    <property type="evidence" value="ECO:0000250"/>
    <property type="project" value="UniProtKB"/>
</dbReference>
<dbReference type="GO" id="GO:0016082">
    <property type="term" value="P:synaptic vesicle priming"/>
    <property type="evidence" value="ECO:0000314"/>
    <property type="project" value="SynGO"/>
</dbReference>
<dbReference type="FunFam" id="1.25.10.10:FF:000347">
    <property type="entry name" value="EFR3 homolog A (S. cerevisiae)"/>
    <property type="match status" value="1"/>
</dbReference>
<dbReference type="InterPro" id="IPR016024">
    <property type="entry name" value="ARM-type_fold"/>
</dbReference>
<dbReference type="InterPro" id="IPR049152">
    <property type="entry name" value="EFR3-like_ARM"/>
</dbReference>
<dbReference type="InterPro" id="IPR051851">
    <property type="entry name" value="EFR3_Homologs"/>
</dbReference>
<dbReference type="PANTHER" id="PTHR12444:SF1">
    <property type="entry name" value="PROTEIN EFR3 HOMOLOG A"/>
    <property type="match status" value="1"/>
</dbReference>
<dbReference type="PANTHER" id="PTHR12444">
    <property type="entry name" value="PROTEIN EFR3 HOMOLOG CMP44E"/>
    <property type="match status" value="1"/>
</dbReference>
<dbReference type="Pfam" id="PF21052">
    <property type="entry name" value="EFR3_ARM"/>
    <property type="match status" value="1"/>
</dbReference>
<dbReference type="SUPFAM" id="SSF48371">
    <property type="entry name" value="ARM repeat"/>
    <property type="match status" value="1"/>
</dbReference>